<sequence length="326" mass="34899">MIVPTYGDVLDASNRIKEYVNKTPVLTSRMLNDRLGAQIYFKGENFQRVGAFKFRGAMNAVSKLSDEKRSKGVIAFSSGNHAQAIALSAKLLNVPATIVMPEDAPALKVAATAGYGAHIIRYNRYTEDREQIGRQLAAEHGFALIPPYDHPDVIAGQGTSAKELLEEVGQLDALFVPLGGGGLLSGSALAARSLSPGCKIFGVEPEAGNDGQQSFRSGSIVHINTPKTIADGAQTQHLGEYTFAIIRENVDDILTVSDQELVKCMHFLAERMKVVVEPTACLGFAGALLKKEELVGKKVGIILSGGNVDMKRYATLISGKEDGPTI</sequence>
<comment type="function">
    <text evidence="2">Catalyzes the deamination of L-threo-3-hydroxyaspartate to oxaloacetate and ammonia. Shows a high specificity towards L-threo-3-hydroxyaspartate as other 3-hydroxyaminoacids, i.e. D,L-erythro- and D-threo-3-hydroxyaspartate, D-threonine, L-threonine, D,L-allothreonine, D-serine, and L-serine, are not substrates for this enzyme. Exhibits no detectable serine racemase activity. Is responsible for the 3-hydroxyaspartate resistance of S.cerevisiae, and thus may be involved in the detoxification of naturally occurring 3-hydroxyaspartate.</text>
</comment>
<comment type="catalytic activity">
    <reaction evidence="2">
        <text>(3S)-3-hydroxy-L-aspartate = oxaloacetate + NH4(+)</text>
        <dbReference type="Rhea" id="RHEA:12424"/>
        <dbReference type="ChEBI" id="CHEBI:16452"/>
        <dbReference type="ChEBI" id="CHEBI:28938"/>
        <dbReference type="ChEBI" id="CHEBI:57251"/>
        <dbReference type="EC" id="4.3.1.16"/>
    </reaction>
</comment>
<comment type="cofactor">
    <cofactor evidence="2">
        <name>pyridoxal 5'-phosphate</name>
        <dbReference type="ChEBI" id="CHEBI:597326"/>
    </cofactor>
</comment>
<comment type="cofactor">
    <cofactor evidence="2">
        <name>Mn(2+)</name>
        <dbReference type="ChEBI" id="CHEBI:29035"/>
    </cofactor>
    <cofactor evidence="2">
        <name>Mg(2+)</name>
        <dbReference type="ChEBI" id="CHEBI:18420"/>
    </cofactor>
    <cofactor evidence="2">
        <name>Ca(2+)</name>
        <dbReference type="ChEBI" id="CHEBI:29108"/>
    </cofactor>
    <text evidence="2">Requires a divalent metal cation such as Mn(2+), Mg(2+), or Ca(2+).</text>
</comment>
<comment type="activity regulation">
    <text evidence="2">Is strongly inhibited by hydroxylamine and EDTA in vitro.</text>
</comment>
<comment type="biophysicochemical properties">
    <kinetics>
        <KM evidence="2">3.9 mM for L-threo-3-hydroxyaspartate</KM>
        <Vmax evidence="2">110.0 umol/min/mg enzyme</Vmax>
    </kinetics>
</comment>
<comment type="subunit">
    <text evidence="2">Monomer.</text>
</comment>
<comment type="disruption phenotype">
    <text evidence="2">Cells lacking this gene grow as well as the wild-type parent strain on SD medium, but fail to grow on hydroxyaspartate-containing agar plate.</text>
</comment>
<comment type="similarity">
    <text evidence="4">Belongs to the serine/threonine dehydratase family.</text>
</comment>
<proteinExistence type="evidence at protein level"/>
<evidence type="ECO:0000250" key="1">
    <source>
        <dbReference type="UniProtKB" id="P04968"/>
    </source>
</evidence>
<evidence type="ECO:0000269" key="2">
    <source>
    </source>
</evidence>
<evidence type="ECO:0000303" key="3">
    <source>
    </source>
</evidence>
<evidence type="ECO:0000305" key="4"/>
<evidence type="ECO:0000305" key="5">
    <source>
    </source>
</evidence>
<reference key="1">
    <citation type="journal article" date="1994" name="Yeast">
        <title>The complete sequencing of a 24.6 kb segment of yeast chromosome XI identified the known loci URA1, SAC1 and TRP3, and revealed 6 new open reading frames including homologues to the threonine dehydratases, membrane transporters, hydantoinases and the phospholipase A2-activating protein.</title>
        <authorList>
            <person name="Tzermia M."/>
            <person name="Horaitis O."/>
            <person name="Alexandraki D."/>
        </authorList>
    </citation>
    <scope>NUCLEOTIDE SEQUENCE [GENOMIC DNA]</scope>
    <source>
        <strain>ATCC 204508 / S288c</strain>
    </source>
</reference>
<reference key="2">
    <citation type="journal article" date="1994" name="Nature">
        <title>Complete DNA sequence of yeast chromosome XI.</title>
        <authorList>
            <person name="Dujon B."/>
            <person name="Alexandraki D."/>
            <person name="Andre B."/>
            <person name="Ansorge W."/>
            <person name="Baladron V."/>
            <person name="Ballesta J.P.G."/>
            <person name="Banrevi A."/>
            <person name="Bolle P.-A."/>
            <person name="Bolotin-Fukuhara M."/>
            <person name="Bossier P."/>
            <person name="Bou G."/>
            <person name="Boyer J."/>
            <person name="Buitrago M.J."/>
            <person name="Cheret G."/>
            <person name="Colleaux L."/>
            <person name="Daignan-Fornier B."/>
            <person name="del Rey F."/>
            <person name="Dion C."/>
            <person name="Domdey H."/>
            <person name="Duesterhoeft A."/>
            <person name="Duesterhus S."/>
            <person name="Entian K.-D."/>
            <person name="Erfle H."/>
            <person name="Esteban P.F."/>
            <person name="Feldmann H."/>
            <person name="Fernandes L."/>
            <person name="Fobo G.M."/>
            <person name="Fritz C."/>
            <person name="Fukuhara H."/>
            <person name="Gabel C."/>
            <person name="Gaillon L."/>
            <person name="Garcia-Cantalejo J.M."/>
            <person name="Garcia-Ramirez J.J."/>
            <person name="Gent M.E."/>
            <person name="Ghazvini M."/>
            <person name="Goffeau A."/>
            <person name="Gonzalez A."/>
            <person name="Grothues D."/>
            <person name="Guerreiro P."/>
            <person name="Hegemann J.H."/>
            <person name="Hewitt N."/>
            <person name="Hilger F."/>
            <person name="Hollenberg C.P."/>
            <person name="Horaitis O."/>
            <person name="Indge K.J."/>
            <person name="Jacquier A."/>
            <person name="James C.M."/>
            <person name="Jauniaux J.-C."/>
            <person name="Jimenez A."/>
            <person name="Keuchel H."/>
            <person name="Kirchrath L."/>
            <person name="Kleine K."/>
            <person name="Koetter P."/>
            <person name="Legrain P."/>
            <person name="Liebl S."/>
            <person name="Louis E.J."/>
            <person name="Maia e Silva A."/>
            <person name="Marck C."/>
            <person name="Monnier A.-L."/>
            <person name="Moestl D."/>
            <person name="Mueller S."/>
            <person name="Obermaier B."/>
            <person name="Oliver S.G."/>
            <person name="Pallier C."/>
            <person name="Pascolo S."/>
            <person name="Pfeiffer F."/>
            <person name="Philippsen P."/>
            <person name="Planta R.J."/>
            <person name="Pohl F.M."/>
            <person name="Pohl T.M."/>
            <person name="Poehlmann R."/>
            <person name="Portetelle D."/>
            <person name="Purnelle B."/>
            <person name="Puzos V."/>
            <person name="Ramezani Rad M."/>
            <person name="Rasmussen S.W."/>
            <person name="Remacha M.A."/>
            <person name="Revuelta J.L."/>
            <person name="Richard G.-F."/>
            <person name="Rieger M."/>
            <person name="Rodrigues-Pousada C."/>
            <person name="Rose M."/>
            <person name="Rupp T."/>
            <person name="Santos M.A."/>
            <person name="Schwager C."/>
            <person name="Sensen C."/>
            <person name="Skala J."/>
            <person name="Soares H."/>
            <person name="Sor F."/>
            <person name="Stegemann J."/>
            <person name="Tettelin H."/>
            <person name="Thierry A."/>
            <person name="Tzermia M."/>
            <person name="Urrestarazu L.A."/>
            <person name="van Dyck L."/>
            <person name="van Vliet-Reedijk J.C."/>
            <person name="Valens M."/>
            <person name="Vandenbol M."/>
            <person name="Vilela C."/>
            <person name="Vissers S."/>
            <person name="von Wettstein D."/>
            <person name="Voss H."/>
            <person name="Wiemann S."/>
            <person name="Xu G."/>
            <person name="Zimmermann J."/>
            <person name="Haasemann M."/>
            <person name="Becker I."/>
            <person name="Mewes H.-W."/>
        </authorList>
    </citation>
    <scope>NUCLEOTIDE SEQUENCE [LARGE SCALE GENOMIC DNA]</scope>
    <source>
        <strain>ATCC 204508 / S288c</strain>
    </source>
</reference>
<reference key="3">
    <citation type="journal article" date="2014" name="G3 (Bethesda)">
        <title>The reference genome sequence of Saccharomyces cerevisiae: Then and now.</title>
        <authorList>
            <person name="Engel S.R."/>
            <person name="Dietrich F.S."/>
            <person name="Fisk D.G."/>
            <person name="Binkley G."/>
            <person name="Balakrishnan R."/>
            <person name="Costanzo M.C."/>
            <person name="Dwight S.S."/>
            <person name="Hitz B.C."/>
            <person name="Karra K."/>
            <person name="Nash R.S."/>
            <person name="Weng S."/>
            <person name="Wong E.D."/>
            <person name="Lloyd P."/>
            <person name="Skrzypek M.S."/>
            <person name="Miyasato S.R."/>
            <person name="Simison M."/>
            <person name="Cherry J.M."/>
        </authorList>
    </citation>
    <scope>GENOME REANNOTATION</scope>
    <source>
        <strain>ATCC 204508 / S288c</strain>
    </source>
</reference>
<reference key="4">
    <citation type="journal article" date="2003" name="FEMS Microbiol. Lett.">
        <title>Serine racemase homologue of Saccharomyces cerevisiae has L-threo-3-hydroxyaspartate dehydratase activity.</title>
        <authorList>
            <person name="Wada M."/>
            <person name="Nakamori S."/>
            <person name="Takagi H."/>
        </authorList>
    </citation>
    <scope>FUNCTION</scope>
    <scope>CATALYTIC ACTIVITY</scope>
    <scope>COFACTOR</scope>
    <scope>BIOPHYSICOCHEMICAL PROPERTIES</scope>
    <scope>SUBSTRATE SPECIFICITY</scope>
    <scope>ACTIVITY REGULATION</scope>
    <scope>SUBUNIT</scope>
    <scope>DISRUPTION PHENOTYPE</scope>
    <source>
        <strain>ATCC 204508 / S288c</strain>
    </source>
</reference>
<reference key="5">
    <citation type="journal article" date="2008" name="Mol. Cell. Proteomics">
        <title>A multidimensional chromatography technology for in-depth phosphoproteome analysis.</title>
        <authorList>
            <person name="Albuquerque C.P."/>
            <person name="Smolka M.B."/>
            <person name="Payne S.H."/>
            <person name="Bafna V."/>
            <person name="Eng J."/>
            <person name="Zhou H."/>
        </authorList>
    </citation>
    <scope>IDENTIFICATION BY MASS SPECTROMETRY [LARGE SCALE ANALYSIS]</scope>
</reference>
<reference key="6">
    <citation type="journal article" date="2012" name="Proc. Natl. Acad. Sci. U.S.A.">
        <title>N-terminal acetylome analyses and functional insights of the N-terminal acetyltransferase NatB.</title>
        <authorList>
            <person name="Van Damme P."/>
            <person name="Lasa M."/>
            <person name="Polevoda B."/>
            <person name="Gazquez C."/>
            <person name="Elosegui-Artola A."/>
            <person name="Kim D.S."/>
            <person name="De Juan-Pardo E."/>
            <person name="Demeyer K."/>
            <person name="Hole K."/>
            <person name="Larrea E."/>
            <person name="Timmerman E."/>
            <person name="Prieto J."/>
            <person name="Arnesen T."/>
            <person name="Sherman F."/>
            <person name="Gevaert K."/>
            <person name="Aldabe R."/>
        </authorList>
    </citation>
    <scope>IDENTIFICATION BY MASS SPECTROMETRY [LARGE SCALE ANALYSIS]</scope>
</reference>
<accession>P36007</accession>
<accession>D6VWY5</accession>
<gene>
    <name type="primary">SRY1</name>
    <name type="ordered locus">YKL218C</name>
</gene>
<dbReference type="EC" id="4.3.1.16" evidence="2"/>
<dbReference type="EMBL" id="X75951">
    <property type="protein sequence ID" value="CAA53555.1"/>
    <property type="molecule type" value="Genomic_DNA"/>
</dbReference>
<dbReference type="EMBL" id="Z28218">
    <property type="protein sequence ID" value="CAA82063.1"/>
    <property type="molecule type" value="Genomic_DNA"/>
</dbReference>
<dbReference type="EMBL" id="BK006944">
    <property type="protein sequence ID" value="DAA08951.1"/>
    <property type="molecule type" value="Genomic_DNA"/>
</dbReference>
<dbReference type="PIR" id="S38061">
    <property type="entry name" value="S38061"/>
</dbReference>
<dbReference type="RefSeq" id="NP_012704.1">
    <property type="nucleotide sequence ID" value="NM_001179783.1"/>
</dbReference>
<dbReference type="SMR" id="P36007"/>
<dbReference type="BioGRID" id="33947">
    <property type="interactions" value="145"/>
</dbReference>
<dbReference type="DIP" id="DIP-6523N"/>
<dbReference type="FunCoup" id="P36007">
    <property type="interactions" value="1416"/>
</dbReference>
<dbReference type="IntAct" id="P36007">
    <property type="interactions" value="3"/>
</dbReference>
<dbReference type="MINT" id="P36007"/>
<dbReference type="STRING" id="4932.YKL218C"/>
<dbReference type="iPTMnet" id="P36007"/>
<dbReference type="PaxDb" id="4932-YKL218C"/>
<dbReference type="PeptideAtlas" id="P36007"/>
<dbReference type="EnsemblFungi" id="YKL218C_mRNA">
    <property type="protein sequence ID" value="YKL218C"/>
    <property type="gene ID" value="YKL218C"/>
</dbReference>
<dbReference type="GeneID" id="853662"/>
<dbReference type="KEGG" id="sce:YKL218C"/>
<dbReference type="AGR" id="SGD:S000001701"/>
<dbReference type="SGD" id="S000001701">
    <property type="gene designation" value="SRY1"/>
</dbReference>
<dbReference type="VEuPathDB" id="FungiDB:YKL218C"/>
<dbReference type="eggNOG" id="KOG1251">
    <property type="taxonomic scope" value="Eukaryota"/>
</dbReference>
<dbReference type="HOGENOM" id="CLU_021152_4_2_1"/>
<dbReference type="InParanoid" id="P36007"/>
<dbReference type="OMA" id="LIHPFDH"/>
<dbReference type="OrthoDB" id="271064at2759"/>
<dbReference type="BioCyc" id="YEAST:YKL218C-MONOMER"/>
<dbReference type="Reactome" id="R-SCE-977347">
    <property type="pathway name" value="Serine biosynthesis"/>
</dbReference>
<dbReference type="SABIO-RK" id="P36007"/>
<dbReference type="BioGRID-ORCS" id="853662">
    <property type="hits" value="0 hits in 10 CRISPR screens"/>
</dbReference>
<dbReference type="PRO" id="PR:P36007"/>
<dbReference type="Proteomes" id="UP000002311">
    <property type="component" value="Chromosome XI"/>
</dbReference>
<dbReference type="RNAct" id="P36007">
    <property type="molecule type" value="protein"/>
</dbReference>
<dbReference type="GO" id="GO:0005524">
    <property type="term" value="F:ATP binding"/>
    <property type="evidence" value="ECO:0000318"/>
    <property type="project" value="GO_Central"/>
</dbReference>
<dbReference type="GO" id="GO:0008721">
    <property type="term" value="F:D-serine ammonia-lyase activity"/>
    <property type="evidence" value="ECO:0000318"/>
    <property type="project" value="GO_Central"/>
</dbReference>
<dbReference type="GO" id="GO:0003941">
    <property type="term" value="F:L-serine ammonia-lyase activity"/>
    <property type="evidence" value="ECO:0000318"/>
    <property type="project" value="GO_Central"/>
</dbReference>
<dbReference type="GO" id="GO:0000287">
    <property type="term" value="F:magnesium ion binding"/>
    <property type="evidence" value="ECO:0000318"/>
    <property type="project" value="GO_Central"/>
</dbReference>
<dbReference type="GO" id="GO:0030170">
    <property type="term" value="F:pyridoxal phosphate binding"/>
    <property type="evidence" value="ECO:0000318"/>
    <property type="project" value="GO_Central"/>
</dbReference>
<dbReference type="GO" id="GO:0030378">
    <property type="term" value="F:serine racemase activity"/>
    <property type="evidence" value="ECO:0000318"/>
    <property type="project" value="GO_Central"/>
</dbReference>
<dbReference type="GO" id="GO:0030848">
    <property type="term" value="F:threo-3-hydroxyaspartate ammonia-lyase activity"/>
    <property type="evidence" value="ECO:0000314"/>
    <property type="project" value="SGD"/>
</dbReference>
<dbReference type="GO" id="GO:0018114">
    <property type="term" value="F:threonine racemase activity"/>
    <property type="evidence" value="ECO:0000318"/>
    <property type="project" value="GO_Central"/>
</dbReference>
<dbReference type="GO" id="GO:0006520">
    <property type="term" value="P:amino acid metabolic process"/>
    <property type="evidence" value="ECO:0007669"/>
    <property type="project" value="InterPro"/>
</dbReference>
<dbReference type="GO" id="GO:0042219">
    <property type="term" value="P:modified amino acid catabolic process"/>
    <property type="evidence" value="ECO:0000314"/>
    <property type="project" value="SGD"/>
</dbReference>
<dbReference type="CDD" id="cd01562">
    <property type="entry name" value="Thr-dehyd"/>
    <property type="match status" value="1"/>
</dbReference>
<dbReference type="FunFam" id="3.40.50.1100:FF:000007">
    <property type="entry name" value="L-threonine dehydratase catabolic TdcB"/>
    <property type="match status" value="1"/>
</dbReference>
<dbReference type="FunFam" id="3.40.50.1100:FF:000005">
    <property type="entry name" value="Threonine dehydratase catabolic"/>
    <property type="match status" value="1"/>
</dbReference>
<dbReference type="Gene3D" id="3.40.50.1100">
    <property type="match status" value="2"/>
</dbReference>
<dbReference type="InterPro" id="IPR000634">
    <property type="entry name" value="Ser/Thr_deHydtase_PyrdxlP-BS"/>
</dbReference>
<dbReference type="InterPro" id="IPR001926">
    <property type="entry name" value="TrpB-like_PALP"/>
</dbReference>
<dbReference type="InterPro" id="IPR036052">
    <property type="entry name" value="TrpB-like_PALP_sf"/>
</dbReference>
<dbReference type="NCBIfam" id="NF005454">
    <property type="entry name" value="PRK07048.1"/>
    <property type="match status" value="1"/>
</dbReference>
<dbReference type="PANTHER" id="PTHR43050">
    <property type="entry name" value="SERINE / THREONINE RACEMASE FAMILY MEMBER"/>
    <property type="match status" value="1"/>
</dbReference>
<dbReference type="PANTHER" id="PTHR43050:SF1">
    <property type="entry name" value="SERINE RACEMASE"/>
    <property type="match status" value="1"/>
</dbReference>
<dbReference type="Pfam" id="PF00291">
    <property type="entry name" value="PALP"/>
    <property type="match status" value="1"/>
</dbReference>
<dbReference type="SUPFAM" id="SSF53686">
    <property type="entry name" value="Tryptophan synthase beta subunit-like PLP-dependent enzymes"/>
    <property type="match status" value="1"/>
</dbReference>
<dbReference type="PROSITE" id="PS00165">
    <property type="entry name" value="DEHYDRATASE_SER_THR"/>
    <property type="match status" value="1"/>
</dbReference>
<keyword id="KW-0456">Lyase</keyword>
<keyword id="KW-0460">Magnesium</keyword>
<keyword id="KW-0464">Manganese</keyword>
<keyword id="KW-0663">Pyridoxal phosphate</keyword>
<keyword id="KW-1185">Reference proteome</keyword>
<organism>
    <name type="scientific">Saccharomyces cerevisiae (strain ATCC 204508 / S288c)</name>
    <name type="common">Baker's yeast</name>
    <dbReference type="NCBI Taxonomy" id="559292"/>
    <lineage>
        <taxon>Eukaryota</taxon>
        <taxon>Fungi</taxon>
        <taxon>Dikarya</taxon>
        <taxon>Ascomycota</taxon>
        <taxon>Saccharomycotina</taxon>
        <taxon>Saccharomycetes</taxon>
        <taxon>Saccharomycetales</taxon>
        <taxon>Saccharomycetaceae</taxon>
        <taxon>Saccharomyces</taxon>
    </lineage>
</organism>
<name>LTHAD_YEAST</name>
<protein>
    <recommendedName>
        <fullName evidence="5">L-threo-3-hydroxyaspartate ammonia-lyase</fullName>
        <ecNumber evidence="2">4.3.1.16</ecNumber>
    </recommendedName>
    <alternativeName>
        <fullName evidence="3">L-threo-3-hydroxyaspartate dehydratase</fullName>
    </alternativeName>
</protein>
<feature type="chain" id="PRO_0000185589" description="L-threo-3-hydroxyaspartate ammonia-lyase">
    <location>
        <begin position="1"/>
        <end position="326"/>
    </location>
</feature>
<feature type="binding site" evidence="1">
    <location>
        <position position="80"/>
    </location>
    <ligand>
        <name>pyridoxal 5'-phosphate</name>
        <dbReference type="ChEBI" id="CHEBI:597326"/>
    </ligand>
</feature>
<feature type="binding site" evidence="1">
    <location>
        <begin position="179"/>
        <end position="183"/>
    </location>
    <ligand>
        <name>pyridoxal 5'-phosphate</name>
        <dbReference type="ChEBI" id="CHEBI:597326"/>
    </ligand>
</feature>
<feature type="binding site" evidence="1">
    <location>
        <position position="304"/>
    </location>
    <ligand>
        <name>pyridoxal 5'-phosphate</name>
        <dbReference type="ChEBI" id="CHEBI:597326"/>
    </ligand>
</feature>
<feature type="modified residue" description="N6-(pyridoxal phosphate)lysine" evidence="1">
    <location>
        <position position="53"/>
    </location>
</feature>